<comment type="function">
    <text evidence="1">Forms part of the ribosomal stalk, playing a central role in the interaction of the ribosome with GTP-bound translation factors.</text>
</comment>
<comment type="subunit">
    <text evidence="1">Part of the ribosomal stalk of the 50S ribosomal subunit. The N-terminus interacts with L11 and the large rRNA to form the base of the stalk. The C-terminus forms an elongated spine to which L12 dimers bind in a sequential fashion forming a multimeric L10(L12)X complex.</text>
</comment>
<comment type="similarity">
    <text evidence="1">Belongs to the universal ribosomal protein uL10 family.</text>
</comment>
<protein>
    <recommendedName>
        <fullName evidence="1">Large ribosomal subunit protein uL10</fullName>
    </recommendedName>
    <alternativeName>
        <fullName evidence="2">50S ribosomal protein L10</fullName>
    </alternativeName>
</protein>
<sequence length="168" mass="18723">MVNKNRQLKEQKVAEIKEKMGKTEAMIMVKYQGLNVEEDTELRKALREAGVEYRVYKNSLAVRAINELGYEGIAQYLEGPIAIAMSYDDPTAPARIINDFAKTHKALELVAGYVQGEVFDVNKVKELASVPAKEVLIAKLLGSFKAPLSNFAYLLSAIKDKKEAEEQA</sequence>
<dbReference type="EMBL" id="AE001437">
    <property type="protein sequence ID" value="AAK81083.1"/>
    <property type="molecule type" value="Genomic_DNA"/>
</dbReference>
<dbReference type="PIR" id="H97286">
    <property type="entry name" value="H97286"/>
</dbReference>
<dbReference type="RefSeq" id="NP_349743.1">
    <property type="nucleotide sequence ID" value="NC_003030.1"/>
</dbReference>
<dbReference type="RefSeq" id="WP_010966423.1">
    <property type="nucleotide sequence ID" value="NC_003030.1"/>
</dbReference>
<dbReference type="SMR" id="Q97EG7"/>
<dbReference type="STRING" id="272562.CA_C3146"/>
<dbReference type="GeneID" id="44999631"/>
<dbReference type="KEGG" id="cac:CA_C3146"/>
<dbReference type="PATRIC" id="fig|272562.8.peg.3326"/>
<dbReference type="eggNOG" id="COG0244">
    <property type="taxonomic scope" value="Bacteria"/>
</dbReference>
<dbReference type="HOGENOM" id="CLU_092227_2_0_9"/>
<dbReference type="OrthoDB" id="9808307at2"/>
<dbReference type="Proteomes" id="UP000000814">
    <property type="component" value="Chromosome"/>
</dbReference>
<dbReference type="GO" id="GO:1990904">
    <property type="term" value="C:ribonucleoprotein complex"/>
    <property type="evidence" value="ECO:0007669"/>
    <property type="project" value="UniProtKB-KW"/>
</dbReference>
<dbReference type="GO" id="GO:0005840">
    <property type="term" value="C:ribosome"/>
    <property type="evidence" value="ECO:0007669"/>
    <property type="project" value="UniProtKB-KW"/>
</dbReference>
<dbReference type="GO" id="GO:0070180">
    <property type="term" value="F:large ribosomal subunit rRNA binding"/>
    <property type="evidence" value="ECO:0007669"/>
    <property type="project" value="UniProtKB-UniRule"/>
</dbReference>
<dbReference type="GO" id="GO:0006412">
    <property type="term" value="P:translation"/>
    <property type="evidence" value="ECO:0007669"/>
    <property type="project" value="UniProtKB-UniRule"/>
</dbReference>
<dbReference type="CDD" id="cd05797">
    <property type="entry name" value="Ribosomal_L10"/>
    <property type="match status" value="1"/>
</dbReference>
<dbReference type="Gene3D" id="3.30.70.1730">
    <property type="match status" value="1"/>
</dbReference>
<dbReference type="Gene3D" id="6.10.250.290">
    <property type="match status" value="1"/>
</dbReference>
<dbReference type="HAMAP" id="MF_00362">
    <property type="entry name" value="Ribosomal_uL10"/>
    <property type="match status" value="1"/>
</dbReference>
<dbReference type="InterPro" id="IPR001790">
    <property type="entry name" value="Ribosomal_uL10"/>
</dbReference>
<dbReference type="InterPro" id="IPR043141">
    <property type="entry name" value="Ribosomal_uL10-like_sf"/>
</dbReference>
<dbReference type="InterPro" id="IPR022973">
    <property type="entry name" value="Ribosomal_uL10_bac"/>
</dbReference>
<dbReference type="InterPro" id="IPR047865">
    <property type="entry name" value="Ribosomal_uL10_bac_type"/>
</dbReference>
<dbReference type="NCBIfam" id="NF000955">
    <property type="entry name" value="PRK00099.1-1"/>
    <property type="match status" value="1"/>
</dbReference>
<dbReference type="PANTHER" id="PTHR11560">
    <property type="entry name" value="39S RIBOSOMAL PROTEIN L10, MITOCHONDRIAL"/>
    <property type="match status" value="1"/>
</dbReference>
<dbReference type="Pfam" id="PF00466">
    <property type="entry name" value="Ribosomal_L10"/>
    <property type="match status" value="1"/>
</dbReference>
<dbReference type="SUPFAM" id="SSF160369">
    <property type="entry name" value="Ribosomal protein L10-like"/>
    <property type="match status" value="1"/>
</dbReference>
<name>RL10_CLOAB</name>
<evidence type="ECO:0000255" key="1">
    <source>
        <dbReference type="HAMAP-Rule" id="MF_00362"/>
    </source>
</evidence>
<evidence type="ECO:0000305" key="2"/>
<feature type="chain" id="PRO_0000154617" description="Large ribosomal subunit protein uL10">
    <location>
        <begin position="1"/>
        <end position="168"/>
    </location>
</feature>
<organism>
    <name type="scientific">Clostridium acetobutylicum (strain ATCC 824 / DSM 792 / JCM 1419 / IAM 19013 / LMG 5710 / NBRC 13948 / NRRL B-527 / VKM B-1787 / 2291 / W)</name>
    <dbReference type="NCBI Taxonomy" id="272562"/>
    <lineage>
        <taxon>Bacteria</taxon>
        <taxon>Bacillati</taxon>
        <taxon>Bacillota</taxon>
        <taxon>Clostridia</taxon>
        <taxon>Eubacteriales</taxon>
        <taxon>Clostridiaceae</taxon>
        <taxon>Clostridium</taxon>
    </lineage>
</organism>
<keyword id="KW-1185">Reference proteome</keyword>
<keyword id="KW-0687">Ribonucleoprotein</keyword>
<keyword id="KW-0689">Ribosomal protein</keyword>
<keyword id="KW-0694">RNA-binding</keyword>
<keyword id="KW-0699">rRNA-binding</keyword>
<reference key="1">
    <citation type="journal article" date="2001" name="J. Bacteriol.">
        <title>Genome sequence and comparative analysis of the solvent-producing bacterium Clostridium acetobutylicum.</title>
        <authorList>
            <person name="Noelling J."/>
            <person name="Breton G."/>
            <person name="Omelchenko M.V."/>
            <person name="Makarova K.S."/>
            <person name="Zeng Q."/>
            <person name="Gibson R."/>
            <person name="Lee H.M."/>
            <person name="Dubois J."/>
            <person name="Qiu D."/>
            <person name="Hitti J."/>
            <person name="Wolf Y.I."/>
            <person name="Tatusov R.L."/>
            <person name="Sabathe F."/>
            <person name="Doucette-Stamm L.A."/>
            <person name="Soucaille P."/>
            <person name="Daly M.J."/>
            <person name="Bennett G.N."/>
            <person name="Koonin E.V."/>
            <person name="Smith D.R."/>
        </authorList>
    </citation>
    <scope>NUCLEOTIDE SEQUENCE [LARGE SCALE GENOMIC DNA]</scope>
    <source>
        <strain>ATCC 824 / DSM 792 / JCM 1419 / IAM 19013 / LMG 5710 / NBRC 13948 / NRRL B-527 / VKM B-1787 / 2291 / W</strain>
    </source>
</reference>
<gene>
    <name evidence="1" type="primary">rplJ</name>
    <name type="ordered locus">CA_C3146</name>
</gene>
<accession>Q97EG7</accession>
<proteinExistence type="inferred from homology"/>